<name>UPP_BURM7</name>
<dbReference type="EC" id="2.4.2.9" evidence="1"/>
<dbReference type="EMBL" id="CP000548">
    <property type="protein sequence ID" value="ABO04783.1"/>
    <property type="molecule type" value="Genomic_DNA"/>
</dbReference>
<dbReference type="RefSeq" id="WP_004186446.1">
    <property type="nucleotide sequence ID" value="NZ_CP007802.1"/>
</dbReference>
<dbReference type="SMR" id="A3MI49"/>
<dbReference type="GeneID" id="93059646"/>
<dbReference type="KEGG" id="bmaz:BM44_2648"/>
<dbReference type="KEGG" id="bmn:BMA10247_0360"/>
<dbReference type="PATRIC" id="fig|320389.8.peg.2987"/>
<dbReference type="UniPathway" id="UPA00574">
    <property type="reaction ID" value="UER00636"/>
</dbReference>
<dbReference type="GO" id="GO:0005525">
    <property type="term" value="F:GTP binding"/>
    <property type="evidence" value="ECO:0007669"/>
    <property type="project" value="UniProtKB-KW"/>
</dbReference>
<dbReference type="GO" id="GO:0000287">
    <property type="term" value="F:magnesium ion binding"/>
    <property type="evidence" value="ECO:0007669"/>
    <property type="project" value="UniProtKB-UniRule"/>
</dbReference>
<dbReference type="GO" id="GO:0004845">
    <property type="term" value="F:uracil phosphoribosyltransferase activity"/>
    <property type="evidence" value="ECO:0007669"/>
    <property type="project" value="UniProtKB-UniRule"/>
</dbReference>
<dbReference type="GO" id="GO:0044206">
    <property type="term" value="P:UMP salvage"/>
    <property type="evidence" value="ECO:0007669"/>
    <property type="project" value="UniProtKB-UniRule"/>
</dbReference>
<dbReference type="GO" id="GO:0006223">
    <property type="term" value="P:uracil salvage"/>
    <property type="evidence" value="ECO:0007669"/>
    <property type="project" value="InterPro"/>
</dbReference>
<dbReference type="CDD" id="cd06223">
    <property type="entry name" value="PRTases_typeI"/>
    <property type="match status" value="1"/>
</dbReference>
<dbReference type="FunFam" id="3.40.50.2020:FF:000003">
    <property type="entry name" value="Uracil phosphoribosyltransferase"/>
    <property type="match status" value="1"/>
</dbReference>
<dbReference type="Gene3D" id="3.40.50.2020">
    <property type="match status" value="1"/>
</dbReference>
<dbReference type="HAMAP" id="MF_01218_B">
    <property type="entry name" value="Upp_B"/>
    <property type="match status" value="1"/>
</dbReference>
<dbReference type="InterPro" id="IPR000836">
    <property type="entry name" value="PRibTrfase_dom"/>
</dbReference>
<dbReference type="InterPro" id="IPR029057">
    <property type="entry name" value="PRTase-like"/>
</dbReference>
<dbReference type="InterPro" id="IPR034332">
    <property type="entry name" value="Upp_B"/>
</dbReference>
<dbReference type="InterPro" id="IPR050054">
    <property type="entry name" value="UPRTase/APRTase"/>
</dbReference>
<dbReference type="InterPro" id="IPR005765">
    <property type="entry name" value="Ura_phspho_trans"/>
</dbReference>
<dbReference type="NCBIfam" id="NF001097">
    <property type="entry name" value="PRK00129.1"/>
    <property type="match status" value="1"/>
</dbReference>
<dbReference type="NCBIfam" id="TIGR01091">
    <property type="entry name" value="upp"/>
    <property type="match status" value="1"/>
</dbReference>
<dbReference type="PANTHER" id="PTHR32315">
    <property type="entry name" value="ADENINE PHOSPHORIBOSYLTRANSFERASE"/>
    <property type="match status" value="1"/>
</dbReference>
<dbReference type="PANTHER" id="PTHR32315:SF4">
    <property type="entry name" value="URACIL PHOSPHORIBOSYLTRANSFERASE, CHLOROPLASTIC"/>
    <property type="match status" value="1"/>
</dbReference>
<dbReference type="Pfam" id="PF14681">
    <property type="entry name" value="UPRTase"/>
    <property type="match status" value="1"/>
</dbReference>
<dbReference type="SUPFAM" id="SSF53271">
    <property type="entry name" value="PRTase-like"/>
    <property type="match status" value="1"/>
</dbReference>
<sequence>MKQDSRFPNLFILDHPLIQHKLTHMRDKDTSTRTFRELLREITLLMGYEITRNLPITTKRVETPLVEIDAPVIAGKKLAIVPVLRAGVGMSDGLLELIPSARVGHIGVYRADDHRPVEYLVRLPDLEDRIFILCDPMVATGYSAAHAIDVLKRRGVPGERLMFLALVAAPEGVQVFQDAHPDVKLYVASLDSHLDDHAYIVPGLGDAGDRLFGTKN</sequence>
<accession>A3MI49</accession>
<feature type="chain" id="PRO_1000053684" description="Uracil phosphoribosyltransferase">
    <location>
        <begin position="1"/>
        <end position="216"/>
    </location>
</feature>
<feature type="binding site" evidence="1">
    <location>
        <position position="85"/>
    </location>
    <ligand>
        <name>5-phospho-alpha-D-ribose 1-diphosphate</name>
        <dbReference type="ChEBI" id="CHEBI:58017"/>
    </ligand>
</feature>
<feature type="binding site" evidence="1">
    <location>
        <position position="110"/>
    </location>
    <ligand>
        <name>5-phospho-alpha-D-ribose 1-diphosphate</name>
        <dbReference type="ChEBI" id="CHEBI:58017"/>
    </ligand>
</feature>
<feature type="binding site" evidence="1">
    <location>
        <begin position="135"/>
        <end position="143"/>
    </location>
    <ligand>
        <name>5-phospho-alpha-D-ribose 1-diphosphate</name>
        <dbReference type="ChEBI" id="CHEBI:58017"/>
    </ligand>
</feature>
<feature type="binding site" evidence="1">
    <location>
        <position position="200"/>
    </location>
    <ligand>
        <name>uracil</name>
        <dbReference type="ChEBI" id="CHEBI:17568"/>
    </ligand>
</feature>
<feature type="binding site" evidence="1">
    <location>
        <begin position="205"/>
        <end position="207"/>
    </location>
    <ligand>
        <name>uracil</name>
        <dbReference type="ChEBI" id="CHEBI:17568"/>
    </ligand>
</feature>
<feature type="binding site" evidence="1">
    <location>
        <position position="206"/>
    </location>
    <ligand>
        <name>5-phospho-alpha-D-ribose 1-diphosphate</name>
        <dbReference type="ChEBI" id="CHEBI:58017"/>
    </ligand>
</feature>
<reference key="1">
    <citation type="journal article" date="2010" name="Genome Biol. Evol.">
        <title>Continuing evolution of Burkholderia mallei through genome reduction and large-scale rearrangements.</title>
        <authorList>
            <person name="Losada L."/>
            <person name="Ronning C.M."/>
            <person name="DeShazer D."/>
            <person name="Woods D."/>
            <person name="Fedorova N."/>
            <person name="Kim H.S."/>
            <person name="Shabalina S.A."/>
            <person name="Pearson T.R."/>
            <person name="Brinkac L."/>
            <person name="Tan P."/>
            <person name="Nandi T."/>
            <person name="Crabtree J."/>
            <person name="Badger J."/>
            <person name="Beckstrom-Sternberg S."/>
            <person name="Saqib M."/>
            <person name="Schutzer S.E."/>
            <person name="Keim P."/>
            <person name="Nierman W.C."/>
        </authorList>
    </citation>
    <scope>NUCLEOTIDE SEQUENCE [LARGE SCALE GENOMIC DNA]</scope>
    <source>
        <strain>NCTC 10247</strain>
    </source>
</reference>
<keyword id="KW-0021">Allosteric enzyme</keyword>
<keyword id="KW-0328">Glycosyltransferase</keyword>
<keyword id="KW-0342">GTP-binding</keyword>
<keyword id="KW-0460">Magnesium</keyword>
<keyword id="KW-0547">Nucleotide-binding</keyword>
<keyword id="KW-0808">Transferase</keyword>
<comment type="function">
    <text evidence="1">Catalyzes the conversion of uracil and 5-phospho-alpha-D-ribose 1-diphosphate (PRPP) to UMP and diphosphate.</text>
</comment>
<comment type="catalytic activity">
    <reaction evidence="1">
        <text>UMP + diphosphate = 5-phospho-alpha-D-ribose 1-diphosphate + uracil</text>
        <dbReference type="Rhea" id="RHEA:13017"/>
        <dbReference type="ChEBI" id="CHEBI:17568"/>
        <dbReference type="ChEBI" id="CHEBI:33019"/>
        <dbReference type="ChEBI" id="CHEBI:57865"/>
        <dbReference type="ChEBI" id="CHEBI:58017"/>
        <dbReference type="EC" id="2.4.2.9"/>
    </reaction>
</comment>
<comment type="cofactor">
    <cofactor evidence="1">
        <name>Mg(2+)</name>
        <dbReference type="ChEBI" id="CHEBI:18420"/>
    </cofactor>
    <text evidence="1">Binds 1 Mg(2+) ion per subunit. The magnesium is bound as Mg-PRPP.</text>
</comment>
<comment type="activity regulation">
    <text evidence="1">Allosterically activated by GTP.</text>
</comment>
<comment type="pathway">
    <text evidence="1">Pyrimidine metabolism; UMP biosynthesis via salvage pathway; UMP from uracil: step 1/1.</text>
</comment>
<comment type="similarity">
    <text evidence="1">Belongs to the UPRTase family.</text>
</comment>
<organism>
    <name type="scientific">Burkholderia mallei (strain NCTC 10247)</name>
    <dbReference type="NCBI Taxonomy" id="320389"/>
    <lineage>
        <taxon>Bacteria</taxon>
        <taxon>Pseudomonadati</taxon>
        <taxon>Pseudomonadota</taxon>
        <taxon>Betaproteobacteria</taxon>
        <taxon>Burkholderiales</taxon>
        <taxon>Burkholderiaceae</taxon>
        <taxon>Burkholderia</taxon>
        <taxon>pseudomallei group</taxon>
    </lineage>
</organism>
<evidence type="ECO:0000255" key="1">
    <source>
        <dbReference type="HAMAP-Rule" id="MF_01218"/>
    </source>
</evidence>
<protein>
    <recommendedName>
        <fullName evidence="1">Uracil phosphoribosyltransferase</fullName>
        <ecNumber evidence="1">2.4.2.9</ecNumber>
    </recommendedName>
    <alternativeName>
        <fullName evidence="1">UMP pyrophosphorylase</fullName>
    </alternativeName>
    <alternativeName>
        <fullName evidence="1">UPRTase</fullName>
    </alternativeName>
</protein>
<proteinExistence type="inferred from homology"/>
<gene>
    <name evidence="1" type="primary">upp</name>
    <name type="ordered locus">BMA10247_0360</name>
</gene>